<proteinExistence type="inferred from homology"/>
<reference key="1">
    <citation type="journal article" date="2008" name="J. Bacteriol.">
        <title>The pangenome structure of Escherichia coli: comparative genomic analysis of E. coli commensal and pathogenic isolates.</title>
        <authorList>
            <person name="Rasko D.A."/>
            <person name="Rosovitz M.J."/>
            <person name="Myers G.S.A."/>
            <person name="Mongodin E.F."/>
            <person name="Fricke W.F."/>
            <person name="Gajer P."/>
            <person name="Crabtree J."/>
            <person name="Sebaihia M."/>
            <person name="Thomson N.R."/>
            <person name="Chaudhuri R."/>
            <person name="Henderson I.R."/>
            <person name="Sperandio V."/>
            <person name="Ravel J."/>
        </authorList>
    </citation>
    <scope>NUCLEOTIDE SEQUENCE [LARGE SCALE GENOMIC DNA]</scope>
    <source>
        <strain>E24377A / ETEC</strain>
    </source>
</reference>
<accession>A7ZUN5</accession>
<dbReference type="EC" id="3.4.13.21" evidence="1"/>
<dbReference type="EMBL" id="CP000800">
    <property type="protein sequence ID" value="ABV19550.1"/>
    <property type="molecule type" value="Genomic_DNA"/>
</dbReference>
<dbReference type="RefSeq" id="WP_000421763.1">
    <property type="nucleotide sequence ID" value="NC_009801.1"/>
</dbReference>
<dbReference type="SMR" id="A7ZUN5"/>
<dbReference type="MEROPS" id="S51.001"/>
<dbReference type="GeneID" id="93777874"/>
<dbReference type="KEGG" id="ecw:EcE24377A_4565"/>
<dbReference type="HOGENOM" id="CLU_071689_0_0_6"/>
<dbReference type="Proteomes" id="UP000001122">
    <property type="component" value="Chromosome"/>
</dbReference>
<dbReference type="GO" id="GO:0005737">
    <property type="term" value="C:cytoplasm"/>
    <property type="evidence" value="ECO:0007669"/>
    <property type="project" value="UniProtKB-SubCell"/>
</dbReference>
<dbReference type="GO" id="GO:0016805">
    <property type="term" value="F:dipeptidase activity"/>
    <property type="evidence" value="ECO:0007669"/>
    <property type="project" value="UniProtKB-UniRule"/>
</dbReference>
<dbReference type="GO" id="GO:0008236">
    <property type="term" value="F:serine-type peptidase activity"/>
    <property type="evidence" value="ECO:0007669"/>
    <property type="project" value="UniProtKB-KW"/>
</dbReference>
<dbReference type="GO" id="GO:0006508">
    <property type="term" value="P:proteolysis"/>
    <property type="evidence" value="ECO:0007669"/>
    <property type="project" value="UniProtKB-UniRule"/>
</dbReference>
<dbReference type="CDD" id="cd03146">
    <property type="entry name" value="GAT1_Peptidase_E"/>
    <property type="match status" value="1"/>
</dbReference>
<dbReference type="FunFam" id="3.40.50.880:FF:000007">
    <property type="entry name" value="Peptidase E"/>
    <property type="match status" value="1"/>
</dbReference>
<dbReference type="Gene3D" id="3.40.50.880">
    <property type="match status" value="1"/>
</dbReference>
<dbReference type="HAMAP" id="MF_00510">
    <property type="entry name" value="Peptidase_E"/>
    <property type="match status" value="1"/>
</dbReference>
<dbReference type="InterPro" id="IPR029062">
    <property type="entry name" value="Class_I_gatase-like"/>
</dbReference>
<dbReference type="InterPro" id="IPR005320">
    <property type="entry name" value="Peptidase_S51"/>
</dbReference>
<dbReference type="InterPro" id="IPR023172">
    <property type="entry name" value="Peptidase_S51_dipeptidase-E"/>
</dbReference>
<dbReference type="NCBIfam" id="NF003642">
    <property type="entry name" value="PRK05282.1"/>
    <property type="match status" value="1"/>
</dbReference>
<dbReference type="PANTHER" id="PTHR20842:SF0">
    <property type="entry name" value="ALPHA-ASPARTYL DIPEPTIDASE"/>
    <property type="match status" value="1"/>
</dbReference>
<dbReference type="PANTHER" id="PTHR20842">
    <property type="entry name" value="PROTEASE S51 ALPHA-ASPARTYL DIPEPTIDASE"/>
    <property type="match status" value="1"/>
</dbReference>
<dbReference type="Pfam" id="PF03575">
    <property type="entry name" value="Peptidase_S51"/>
    <property type="match status" value="1"/>
</dbReference>
<dbReference type="SUPFAM" id="SSF52317">
    <property type="entry name" value="Class I glutamine amidotransferase-like"/>
    <property type="match status" value="1"/>
</dbReference>
<gene>
    <name evidence="1" type="primary">pepE</name>
    <name type="ordered locus">EcE24377A_4565</name>
</gene>
<comment type="function">
    <text evidence="1">Hydrolyzes dipeptides containing N-terminal aspartate residues. May play a role in allowing the cell to use peptide aspartate to spare carbon otherwise required for the synthesis of the aspartate family of amino acids.</text>
</comment>
<comment type="catalytic activity">
    <reaction evidence="1">
        <text>Dipeptidase E catalyzes the hydrolysis of dipeptides Asp-|-Xaa. It does not act on peptides with N-terminal Glu, Asn or Gln, nor does it cleave isoaspartyl peptides.</text>
        <dbReference type="EC" id="3.4.13.21"/>
    </reaction>
</comment>
<comment type="subcellular location">
    <subcellularLocation>
        <location evidence="1">Cytoplasm</location>
    </subcellularLocation>
</comment>
<comment type="similarity">
    <text evidence="1">Belongs to the peptidase S51 family.</text>
</comment>
<keyword id="KW-0963">Cytoplasm</keyword>
<keyword id="KW-0224">Dipeptidase</keyword>
<keyword id="KW-0378">Hydrolase</keyword>
<keyword id="KW-0645">Protease</keyword>
<keyword id="KW-1185">Reference proteome</keyword>
<keyword id="KW-0720">Serine protease</keyword>
<sequence length="229" mass="24570">MELLLLSNSTLPGKAWLEHALPLIAEQLQGRRSAVFIPFAGVTQTWDDYTAKTAAVLAPLGVSVTGIHSVVDPVAAIENAEIVIVGGGNTFQLLKQCRERGLLAPITDVVKRGALYIGWSAGANLACPTIRTTNDMPIVDPQGFDALNLFPLQINPHFTNALPEGHKGETREQRIRELLVVAPELTIIGLPEGNWITVSKGHATLGGPNTTYVFKAGEEAVPLEAGHRF</sequence>
<protein>
    <recommendedName>
        <fullName evidence="1">Peptidase E</fullName>
        <ecNumber evidence="1">3.4.13.21</ecNumber>
    </recommendedName>
    <alternativeName>
        <fullName evidence="1">Alpha-aspartyl dipeptidase</fullName>
    </alternativeName>
    <alternativeName>
        <fullName evidence="1">Asp-specific dipeptidase</fullName>
    </alternativeName>
    <alternativeName>
        <fullName evidence="1">Dipeptidase E</fullName>
    </alternativeName>
</protein>
<evidence type="ECO:0000255" key="1">
    <source>
        <dbReference type="HAMAP-Rule" id="MF_00510"/>
    </source>
</evidence>
<feature type="chain" id="PRO_1000060872" description="Peptidase E">
    <location>
        <begin position="1"/>
        <end position="229"/>
    </location>
</feature>
<feature type="active site" description="Charge relay system" evidence="1">
    <location>
        <position position="120"/>
    </location>
</feature>
<feature type="active site" description="Charge relay system" evidence="1">
    <location>
        <position position="135"/>
    </location>
</feature>
<feature type="active site" description="Charge relay system" evidence="1">
    <location>
        <position position="157"/>
    </location>
</feature>
<organism>
    <name type="scientific">Escherichia coli O139:H28 (strain E24377A / ETEC)</name>
    <dbReference type="NCBI Taxonomy" id="331111"/>
    <lineage>
        <taxon>Bacteria</taxon>
        <taxon>Pseudomonadati</taxon>
        <taxon>Pseudomonadota</taxon>
        <taxon>Gammaproteobacteria</taxon>
        <taxon>Enterobacterales</taxon>
        <taxon>Enterobacteriaceae</taxon>
        <taxon>Escherichia</taxon>
    </lineage>
</organism>
<name>PEPE_ECO24</name>